<name>PTGA_STAAM</name>
<gene>
    <name type="primary">crr</name>
    <name type="ordered locus">SAV1422</name>
</gene>
<evidence type="ECO:0000250" key="1">
    <source>
        <dbReference type="UniProtKB" id="P69783"/>
    </source>
</evidence>
<evidence type="ECO:0000255" key="2">
    <source>
        <dbReference type="PROSITE-ProRule" id="PRU00416"/>
    </source>
</evidence>
<evidence type="ECO:0000305" key="3"/>
<reference key="1">
    <citation type="journal article" date="2001" name="Lancet">
        <title>Whole genome sequencing of meticillin-resistant Staphylococcus aureus.</title>
        <authorList>
            <person name="Kuroda M."/>
            <person name="Ohta T."/>
            <person name="Uchiyama I."/>
            <person name="Baba T."/>
            <person name="Yuzawa H."/>
            <person name="Kobayashi I."/>
            <person name="Cui L."/>
            <person name="Oguchi A."/>
            <person name="Aoki K."/>
            <person name="Nagai Y."/>
            <person name="Lian J.-Q."/>
            <person name="Ito T."/>
            <person name="Kanamori M."/>
            <person name="Matsumaru H."/>
            <person name="Maruyama A."/>
            <person name="Murakami H."/>
            <person name="Hosoyama A."/>
            <person name="Mizutani-Ui Y."/>
            <person name="Takahashi N.K."/>
            <person name="Sawano T."/>
            <person name="Inoue R."/>
            <person name="Kaito C."/>
            <person name="Sekimizu K."/>
            <person name="Hirakawa H."/>
            <person name="Kuhara S."/>
            <person name="Goto S."/>
            <person name="Yabuzaki J."/>
            <person name="Kanehisa M."/>
            <person name="Yamashita A."/>
            <person name="Oshima K."/>
            <person name="Furuya K."/>
            <person name="Yoshino C."/>
            <person name="Shiba T."/>
            <person name="Hattori M."/>
            <person name="Ogasawara N."/>
            <person name="Hayashi H."/>
            <person name="Hiramatsu K."/>
        </authorList>
    </citation>
    <scope>NUCLEOTIDE SEQUENCE [LARGE SCALE GENOMIC DNA]</scope>
    <source>
        <strain>Mu50 / ATCC 700699</strain>
    </source>
</reference>
<sequence>MFKKLFGKGKEVQKDIAIYAPLTGEYVKIEDIPDPVFAQKMMGEGFGINPTEGEVVSPIAGRVDNVFPTKHAIGLKADNGLELLVHIGLDTVQLDGEGFEVLVSSGDEVNVGDPLVRFNLEFINNNAKSVISPIIITNTDQAASINIYDENAVIKGETKVIDVTMN</sequence>
<proteinExistence type="inferred from homology"/>
<keyword id="KW-0963">Cytoplasm</keyword>
<keyword id="KW-0418">Kinase</keyword>
<keyword id="KW-0479">Metal-binding</keyword>
<keyword id="KW-0597">Phosphoprotein</keyword>
<keyword id="KW-0598">Phosphotransferase system</keyword>
<keyword id="KW-0762">Sugar transport</keyword>
<keyword id="KW-0808">Transferase</keyword>
<keyword id="KW-0813">Transport</keyword>
<keyword id="KW-0862">Zinc</keyword>
<accession>P60856</accession>
<accession>Q99U65</accession>
<comment type="function">
    <text evidence="1">The phosphoenolpyruvate-dependent sugar phosphotransferase system (sugar PTS), a major carbohydrate active transport system, catalyzes the phosphorylation of incoming sugar substrates concomitantly with their translocation across the cell membrane. The enzyme II complex composed of PtsG and Crr is involved in glucose transport.</text>
</comment>
<comment type="cofactor">
    <cofactor evidence="1">
        <name>Zn(2+)</name>
        <dbReference type="ChEBI" id="CHEBI:29105"/>
    </cofactor>
    <text evidence="1">Binds 1 zinc ion per glycerol kinase EIIA-Glc dimer. The zinc ion is important for dimerization.</text>
</comment>
<comment type="subunit">
    <text evidence="1">Heterodimer with glycerol kinase (glpk).</text>
</comment>
<comment type="subcellular location">
    <subcellularLocation>
        <location evidence="3">Cytoplasm</location>
    </subcellularLocation>
</comment>
<comment type="domain">
    <text evidence="2">The EIIA domain is phosphorylated by phospho-HPr on a histidyl residue. Then, it transfers the phosphoryl group to the EIIB domain.</text>
</comment>
<organism>
    <name type="scientific">Staphylococcus aureus (strain Mu50 / ATCC 700699)</name>
    <dbReference type="NCBI Taxonomy" id="158878"/>
    <lineage>
        <taxon>Bacteria</taxon>
        <taxon>Bacillati</taxon>
        <taxon>Bacillota</taxon>
        <taxon>Bacilli</taxon>
        <taxon>Bacillales</taxon>
        <taxon>Staphylococcaceae</taxon>
        <taxon>Staphylococcus</taxon>
    </lineage>
</organism>
<dbReference type="EMBL" id="BA000017">
    <property type="protein sequence ID" value="BAB57584.1"/>
    <property type="molecule type" value="Genomic_DNA"/>
</dbReference>
<dbReference type="RefSeq" id="WP_000473653.1">
    <property type="nucleotide sequence ID" value="NC_002758.2"/>
</dbReference>
<dbReference type="SMR" id="P60856"/>
<dbReference type="KEGG" id="sav:SAV1422"/>
<dbReference type="HOGENOM" id="CLU_012312_5_3_9"/>
<dbReference type="PhylomeDB" id="P60856"/>
<dbReference type="Proteomes" id="UP000002481">
    <property type="component" value="Chromosome"/>
</dbReference>
<dbReference type="GO" id="GO:0005737">
    <property type="term" value="C:cytoplasm"/>
    <property type="evidence" value="ECO:0007669"/>
    <property type="project" value="UniProtKB-SubCell"/>
</dbReference>
<dbReference type="GO" id="GO:0016301">
    <property type="term" value="F:kinase activity"/>
    <property type="evidence" value="ECO:0007669"/>
    <property type="project" value="UniProtKB-KW"/>
</dbReference>
<dbReference type="GO" id="GO:0046872">
    <property type="term" value="F:metal ion binding"/>
    <property type="evidence" value="ECO:0007669"/>
    <property type="project" value="UniProtKB-KW"/>
</dbReference>
<dbReference type="GO" id="GO:0009401">
    <property type="term" value="P:phosphoenolpyruvate-dependent sugar phosphotransferase system"/>
    <property type="evidence" value="ECO:0007669"/>
    <property type="project" value="UniProtKB-KW"/>
</dbReference>
<dbReference type="FunFam" id="2.70.70.10:FF:000001">
    <property type="entry name" value="PTS system glucose-specific IIA component"/>
    <property type="match status" value="1"/>
</dbReference>
<dbReference type="Gene3D" id="2.70.70.10">
    <property type="entry name" value="Glucose Permease (Domain IIA)"/>
    <property type="match status" value="1"/>
</dbReference>
<dbReference type="InterPro" id="IPR011055">
    <property type="entry name" value="Dup_hybrid_motif"/>
</dbReference>
<dbReference type="InterPro" id="IPR001127">
    <property type="entry name" value="PTS_EIIA_1_perm"/>
</dbReference>
<dbReference type="InterPro" id="IPR050890">
    <property type="entry name" value="PTS_EIIA_component"/>
</dbReference>
<dbReference type="NCBIfam" id="TIGR00830">
    <property type="entry name" value="PTBA"/>
    <property type="match status" value="1"/>
</dbReference>
<dbReference type="PANTHER" id="PTHR45008">
    <property type="entry name" value="PTS SYSTEM GLUCOSE-SPECIFIC EIIA COMPONENT"/>
    <property type="match status" value="1"/>
</dbReference>
<dbReference type="PANTHER" id="PTHR45008:SF1">
    <property type="entry name" value="PTS SYSTEM GLUCOSE-SPECIFIC EIIA COMPONENT"/>
    <property type="match status" value="1"/>
</dbReference>
<dbReference type="Pfam" id="PF00358">
    <property type="entry name" value="PTS_EIIA_1"/>
    <property type="match status" value="1"/>
</dbReference>
<dbReference type="SUPFAM" id="SSF51261">
    <property type="entry name" value="Duplicated hybrid motif"/>
    <property type="match status" value="1"/>
</dbReference>
<dbReference type="PROSITE" id="PS51093">
    <property type="entry name" value="PTS_EIIA_TYPE_1"/>
    <property type="match status" value="1"/>
</dbReference>
<dbReference type="PROSITE" id="PS00371">
    <property type="entry name" value="PTS_EIIA_TYPE_1_HIS"/>
    <property type="match status" value="1"/>
</dbReference>
<protein>
    <recommendedName>
        <fullName evidence="1">PTS system glucose-specific EIIA component</fullName>
    </recommendedName>
    <alternativeName>
        <fullName evidence="1">EIIA-Glc</fullName>
    </alternativeName>
    <alternativeName>
        <fullName evidence="1">EIII-Glc</fullName>
    </alternativeName>
    <alternativeName>
        <fullName evidence="1">Glucose-specific phosphotransferase enzyme IIA component</fullName>
    </alternativeName>
</protein>
<feature type="chain" id="PRO_0000186548" description="PTS system glucose-specific EIIA component">
    <location>
        <begin position="1"/>
        <end position="166"/>
    </location>
</feature>
<feature type="domain" description="PTS EIIA type-1" evidence="2">
    <location>
        <begin position="34"/>
        <end position="138"/>
    </location>
</feature>
<feature type="active site" description="Tele-phosphohistidine intermediate; for EIIA activity" evidence="1 2">
    <location>
        <position position="86"/>
    </location>
</feature>
<feature type="binding site" evidence="1">
    <location>
        <position position="71"/>
    </location>
    <ligand>
        <name>Zn(2+)</name>
        <dbReference type="ChEBI" id="CHEBI:29105"/>
        <note>ligand shared with glycerol kinase</note>
    </ligand>
</feature>
<feature type="binding site" evidence="1">
    <location>
        <position position="86"/>
    </location>
    <ligand>
        <name>Zn(2+)</name>
        <dbReference type="ChEBI" id="CHEBI:29105"/>
        <note>ligand shared with glycerol kinase</note>
    </ligand>
</feature>
<feature type="site" description="Important for phospho-donor activity" evidence="1">
    <location>
        <position position="71"/>
    </location>
</feature>
<feature type="modified residue" description="Phosphohistidine; by HPr" evidence="1">
    <location>
        <position position="86"/>
    </location>
</feature>